<feature type="chain" id="PRO_0000269620" description="Hemin import ATP-binding protein HmuV">
    <location>
        <begin position="1"/>
        <end position="262"/>
    </location>
</feature>
<feature type="domain" description="ABC transporter" evidence="1">
    <location>
        <begin position="5"/>
        <end position="242"/>
    </location>
</feature>
<feature type="binding site" evidence="1">
    <location>
        <begin position="37"/>
        <end position="44"/>
    </location>
    <ligand>
        <name>ATP</name>
        <dbReference type="ChEBI" id="CHEBI:30616"/>
    </ligand>
</feature>
<reference key="1">
    <citation type="submission" date="2006-01" db="EMBL/GenBank/DDBJ databases">
        <title>Complete sequence of Rhodopseudomonas palustris HaA2.</title>
        <authorList>
            <consortium name="US DOE Joint Genome Institute"/>
            <person name="Copeland A."/>
            <person name="Lucas S."/>
            <person name="Lapidus A."/>
            <person name="Barry K."/>
            <person name="Detter J.C."/>
            <person name="Glavina T."/>
            <person name="Hammon N."/>
            <person name="Israni S."/>
            <person name="Pitluck S."/>
            <person name="Chain P."/>
            <person name="Malfatti S."/>
            <person name="Shin M."/>
            <person name="Vergez L."/>
            <person name="Schmutz J."/>
            <person name="Larimer F."/>
            <person name="Land M."/>
            <person name="Hauser L."/>
            <person name="Pelletier D.A."/>
            <person name="Kyrpides N."/>
            <person name="Anderson I."/>
            <person name="Oda Y."/>
            <person name="Harwood C.S."/>
            <person name="Richardson P."/>
        </authorList>
    </citation>
    <scope>NUCLEOTIDE SEQUENCE [LARGE SCALE GENOMIC DNA]</scope>
    <source>
        <strain>HaA2</strain>
    </source>
</reference>
<gene>
    <name evidence="1" type="primary">hmuV</name>
    <name type="ordered locus">RPB_0168</name>
</gene>
<dbReference type="EC" id="7.6.2.-" evidence="1"/>
<dbReference type="EMBL" id="CP000250">
    <property type="protein sequence ID" value="ABD04880.1"/>
    <property type="molecule type" value="Genomic_DNA"/>
</dbReference>
<dbReference type="RefSeq" id="WP_011439070.1">
    <property type="nucleotide sequence ID" value="NC_007778.1"/>
</dbReference>
<dbReference type="SMR" id="Q2J3T0"/>
<dbReference type="STRING" id="316058.RPB_0168"/>
<dbReference type="KEGG" id="rpb:RPB_0168"/>
<dbReference type="eggNOG" id="COG4559">
    <property type="taxonomic scope" value="Bacteria"/>
</dbReference>
<dbReference type="HOGENOM" id="CLU_000604_1_11_5"/>
<dbReference type="OrthoDB" id="9810077at2"/>
<dbReference type="Proteomes" id="UP000008809">
    <property type="component" value="Chromosome"/>
</dbReference>
<dbReference type="GO" id="GO:0005886">
    <property type="term" value="C:plasma membrane"/>
    <property type="evidence" value="ECO:0007669"/>
    <property type="project" value="UniProtKB-SubCell"/>
</dbReference>
<dbReference type="GO" id="GO:0005524">
    <property type="term" value="F:ATP binding"/>
    <property type="evidence" value="ECO:0007669"/>
    <property type="project" value="UniProtKB-KW"/>
</dbReference>
<dbReference type="GO" id="GO:0016887">
    <property type="term" value="F:ATP hydrolysis activity"/>
    <property type="evidence" value="ECO:0007669"/>
    <property type="project" value="InterPro"/>
</dbReference>
<dbReference type="CDD" id="cd03214">
    <property type="entry name" value="ABC_Iron-Siderophores_B12_Hemin"/>
    <property type="match status" value="1"/>
</dbReference>
<dbReference type="Gene3D" id="3.40.50.300">
    <property type="entry name" value="P-loop containing nucleotide triphosphate hydrolases"/>
    <property type="match status" value="1"/>
</dbReference>
<dbReference type="InterPro" id="IPR003593">
    <property type="entry name" value="AAA+_ATPase"/>
</dbReference>
<dbReference type="InterPro" id="IPR003439">
    <property type="entry name" value="ABC_transporter-like_ATP-bd"/>
</dbReference>
<dbReference type="InterPro" id="IPR027417">
    <property type="entry name" value="P-loop_NTPase"/>
</dbReference>
<dbReference type="NCBIfam" id="NF010068">
    <property type="entry name" value="PRK13548.1"/>
    <property type="match status" value="1"/>
</dbReference>
<dbReference type="PANTHER" id="PTHR42794">
    <property type="entry name" value="HEMIN IMPORT ATP-BINDING PROTEIN HMUV"/>
    <property type="match status" value="1"/>
</dbReference>
<dbReference type="PANTHER" id="PTHR42794:SF1">
    <property type="entry name" value="HEMIN IMPORT ATP-BINDING PROTEIN HMUV"/>
    <property type="match status" value="1"/>
</dbReference>
<dbReference type="Pfam" id="PF00005">
    <property type="entry name" value="ABC_tran"/>
    <property type="match status" value="1"/>
</dbReference>
<dbReference type="SMART" id="SM00382">
    <property type="entry name" value="AAA"/>
    <property type="match status" value="1"/>
</dbReference>
<dbReference type="SUPFAM" id="SSF52540">
    <property type="entry name" value="P-loop containing nucleoside triphosphate hydrolases"/>
    <property type="match status" value="1"/>
</dbReference>
<dbReference type="PROSITE" id="PS50893">
    <property type="entry name" value="ABC_TRANSPORTER_2"/>
    <property type="match status" value="1"/>
</dbReference>
<dbReference type="PROSITE" id="PS51261">
    <property type="entry name" value="HMUV"/>
    <property type="match status" value="1"/>
</dbReference>
<sequence length="262" mass="27918">MSTALEARKAGFATGGATLVHNVDLAVAQGELIAIVGPNGAGKSTLLRMLSGDLRPTSGSVRLGDRELSSYSPRELADRRAVLAQHINVSFPFTVEEIVRMGTGDVGHRKAGALIDAALHEVGLGEFRSRDITTLSGGEQQRAHFARVLVQLWSSEAVRGPGILLLDEPTSSLDIRHQLDLAHTARRCARNGATVIAILHDLNLATRFAERIVVMHRGAVAADGPPSTVMRPELIGAVFDVELTVQMDASGSPFVLPELTRA</sequence>
<comment type="function">
    <text evidence="1">Part of the ABC transporter complex HmuTUV involved in hemin import. Responsible for energy coupling to the transport system.</text>
</comment>
<comment type="subunit">
    <text evidence="1">The complex is composed of two ATP-binding proteins (HmuV), two transmembrane proteins (HmuU) and a solute-binding protein (HmuT).</text>
</comment>
<comment type="subcellular location">
    <subcellularLocation>
        <location evidence="1">Cell inner membrane</location>
        <topology evidence="1">Peripheral membrane protein</topology>
    </subcellularLocation>
</comment>
<comment type="similarity">
    <text evidence="1">Belongs to the ABC transporter superfamily. Heme (hemin) importer (TC 3.A.1.14.5) family.</text>
</comment>
<name>HMUV_RHOP2</name>
<evidence type="ECO:0000255" key="1">
    <source>
        <dbReference type="HAMAP-Rule" id="MF_01718"/>
    </source>
</evidence>
<accession>Q2J3T0</accession>
<protein>
    <recommendedName>
        <fullName evidence="1">Hemin import ATP-binding protein HmuV</fullName>
        <ecNumber evidence="1">7.6.2.-</ecNumber>
    </recommendedName>
</protein>
<organism>
    <name type="scientific">Rhodopseudomonas palustris (strain HaA2)</name>
    <dbReference type="NCBI Taxonomy" id="316058"/>
    <lineage>
        <taxon>Bacteria</taxon>
        <taxon>Pseudomonadati</taxon>
        <taxon>Pseudomonadota</taxon>
        <taxon>Alphaproteobacteria</taxon>
        <taxon>Hyphomicrobiales</taxon>
        <taxon>Nitrobacteraceae</taxon>
        <taxon>Rhodopseudomonas</taxon>
    </lineage>
</organism>
<keyword id="KW-0067">ATP-binding</keyword>
<keyword id="KW-0997">Cell inner membrane</keyword>
<keyword id="KW-1003">Cell membrane</keyword>
<keyword id="KW-0472">Membrane</keyword>
<keyword id="KW-0547">Nucleotide-binding</keyword>
<keyword id="KW-1185">Reference proteome</keyword>
<keyword id="KW-1278">Translocase</keyword>
<keyword id="KW-0813">Transport</keyword>
<proteinExistence type="inferred from homology"/>